<protein>
    <recommendedName>
        <fullName evidence="1">Galactose-1-phosphate uridylyltransferase</fullName>
        <shortName evidence="1">Gal-1-P uridylyltransferase</shortName>
        <ecNumber evidence="1">2.7.7.12</ecNumber>
    </recommendedName>
    <alternativeName>
        <fullName evidence="1">UDP-glucose--hexose-1-phosphate uridylyltransferase</fullName>
    </alternativeName>
</protein>
<dbReference type="EC" id="2.7.7.12" evidence="1"/>
<dbReference type="EMBL" id="AB303839">
    <property type="protein sequence ID" value="BAF73926.1"/>
    <property type="molecule type" value="Genomic_DNA"/>
</dbReference>
<dbReference type="EMBL" id="AP010888">
    <property type="protein sequence ID" value="BAJ67288.1"/>
    <property type="molecule type" value="Genomic_DNA"/>
</dbReference>
<dbReference type="RefSeq" id="WP_007052335.1">
    <property type="nucleotide sequence ID" value="NZ_CAXVKM010000002.1"/>
</dbReference>
<dbReference type="GeneID" id="69578837"/>
<dbReference type="KEGG" id="blm:BLLJ_1621"/>
<dbReference type="HOGENOM" id="CLU_047799_0_0_11"/>
<dbReference type="UniPathway" id="UPA00214"/>
<dbReference type="GO" id="GO:0005737">
    <property type="term" value="C:cytoplasm"/>
    <property type="evidence" value="ECO:0007669"/>
    <property type="project" value="UniProtKB-SubCell"/>
</dbReference>
<dbReference type="GO" id="GO:0008108">
    <property type="term" value="F:UDP-glucose:hexose-1-phosphate uridylyltransferase activity"/>
    <property type="evidence" value="ECO:0000314"/>
    <property type="project" value="UniProtKB"/>
</dbReference>
<dbReference type="GO" id="GO:0005975">
    <property type="term" value="P:carbohydrate metabolic process"/>
    <property type="evidence" value="ECO:0000314"/>
    <property type="project" value="UniProtKB"/>
</dbReference>
<dbReference type="GO" id="GO:0006012">
    <property type="term" value="P:galactose metabolic process"/>
    <property type="evidence" value="ECO:0007669"/>
    <property type="project" value="UniProtKB-UniRule"/>
</dbReference>
<dbReference type="HAMAP" id="MF_00571">
    <property type="entry name" value="GalP_UDP_trans"/>
    <property type="match status" value="1"/>
</dbReference>
<dbReference type="InterPro" id="IPR000766">
    <property type="entry name" value="GalP_uridyl_Trfase_II"/>
</dbReference>
<dbReference type="InterPro" id="IPR005849">
    <property type="entry name" value="GalP_Utransf_N"/>
</dbReference>
<dbReference type="NCBIfam" id="NF003632">
    <property type="entry name" value="PRK05270.2-1"/>
    <property type="match status" value="1"/>
</dbReference>
<dbReference type="PANTHER" id="PTHR39191:SF1">
    <property type="entry name" value="DUF4922 DOMAIN-CONTAINING PROTEIN"/>
    <property type="match status" value="1"/>
</dbReference>
<dbReference type="PANTHER" id="PTHR39191">
    <property type="entry name" value="GALACTOSE-1-PHOSPHATE URIDYLYLTRANSFERASE"/>
    <property type="match status" value="1"/>
</dbReference>
<dbReference type="Pfam" id="PF01087">
    <property type="entry name" value="GalP_UDP_transf"/>
    <property type="match status" value="1"/>
</dbReference>
<name>GALT_BIFL2</name>
<evidence type="ECO:0000255" key="1">
    <source>
        <dbReference type="HAMAP-Rule" id="MF_00571"/>
    </source>
</evidence>
<evidence type="ECO:0000269" key="2">
    <source>
    </source>
</evidence>
<evidence type="ECO:0000305" key="3"/>
<keyword id="KW-0119">Carbohydrate metabolism</keyword>
<keyword id="KW-0963">Cytoplasm</keyword>
<keyword id="KW-0299">Galactose metabolism</keyword>
<keyword id="KW-0548">Nucleotidyltransferase</keyword>
<keyword id="KW-0808">Transferase</keyword>
<reference key="1">
    <citation type="journal article" date="2007" name="Appl. Environ. Microbiol.">
        <title>Identification of N-acetylhexosamine 1-kinase in the complete lacto-N-biose I/galacto-N-biose metabolic pathway in Bifidobacterium longum.</title>
        <authorList>
            <person name="Nishimoto M."/>
            <person name="Kitaoka M."/>
        </authorList>
    </citation>
    <scope>NUCLEOTIDE SEQUENCE [GENOMIC DNA]</scope>
    <scope>FUNCTION</scope>
    <scope>CATALYTIC ACTIVITY</scope>
    <scope>PATHWAY</scope>
    <source>
        <strain>ATCC 15707 / DSM 20219 / CCUG 28903 / JCM 1217 / NCIMB 702259 / NCTC 11818 / E194b</strain>
    </source>
</reference>
<reference key="2">
    <citation type="journal article" date="2011" name="Nature">
        <title>Bifidobacteria can protect from enteropathogenic infection through production of acetate.</title>
        <authorList>
            <person name="Fukuda S."/>
            <person name="Toh H."/>
            <person name="Hase K."/>
            <person name="Oshima K."/>
            <person name="Nakanishi Y."/>
            <person name="Yoshimura K."/>
            <person name="Tobe T."/>
            <person name="Clarke J.M."/>
            <person name="Topping D.L."/>
            <person name="Suzuki T."/>
            <person name="Taylor T.D."/>
            <person name="Itoh K."/>
            <person name="Kikuchi J."/>
            <person name="Morita H."/>
            <person name="Hattori M."/>
            <person name="Ohno H."/>
        </authorList>
    </citation>
    <scope>NUCLEOTIDE SEQUENCE [LARGE SCALE GENOMIC DNA]</scope>
    <source>
        <strain>ATCC 15707 / DSM 20219 / CCUG 28903 / JCM 1217 / NCIMB 702259 / NCTC 11818 / E194b</strain>
    </source>
</reference>
<comment type="function">
    <text evidence="2">Transfers the UMP unit from UDP-glucose (UDP-Glc) to Gal1P. Can also transfer the UMP unit to GlcNAc1P and GalNAc1P. Involved in the general galactose metabolism, and also involved in the lacto-N-biose I/galacto-N-biose (LNB/GNB) degradation pathway, which is important for host intestinal colonization by bifidobacteria.</text>
</comment>
<comment type="catalytic activity">
    <reaction evidence="1 2">
        <text>alpha-D-galactose 1-phosphate + UDP-alpha-D-glucose = alpha-D-glucose 1-phosphate + UDP-alpha-D-galactose</text>
        <dbReference type="Rhea" id="RHEA:13989"/>
        <dbReference type="ChEBI" id="CHEBI:58336"/>
        <dbReference type="ChEBI" id="CHEBI:58601"/>
        <dbReference type="ChEBI" id="CHEBI:58885"/>
        <dbReference type="ChEBI" id="CHEBI:66914"/>
        <dbReference type="EC" id="2.7.7.12"/>
    </reaction>
</comment>
<comment type="pathway">
    <text evidence="1 2">Carbohydrate metabolism; galactose metabolism.</text>
</comment>
<comment type="subcellular location">
    <subcellularLocation>
        <location evidence="1">Cytoplasm</location>
    </subcellularLocation>
</comment>
<comment type="similarity">
    <text evidence="1">Belongs to the galactose-1-phosphate uridylyltransferase type 2 family.</text>
</comment>
<organism>
    <name type="scientific">Bifidobacterium longum subsp. longum (strain ATCC 15707 / DSM 20219 / JCM 1217 / NCTC 11818 / E194b)</name>
    <dbReference type="NCBI Taxonomy" id="565042"/>
    <lineage>
        <taxon>Bacteria</taxon>
        <taxon>Bacillati</taxon>
        <taxon>Actinomycetota</taxon>
        <taxon>Actinomycetes</taxon>
        <taxon>Bifidobacteriales</taxon>
        <taxon>Bifidobacteriaceae</taxon>
        <taxon>Bifidobacterium</taxon>
    </lineage>
</organism>
<gene>
    <name evidence="1" type="primary">galT</name>
    <name type="synonym">lnpC</name>
    <name type="ordered locus">BLLJ_1621</name>
</gene>
<feature type="chain" id="PRO_0000424072" description="Galactose-1-phosphate uridylyltransferase">
    <location>
        <begin position="1"/>
        <end position="515"/>
    </location>
</feature>
<feature type="sequence conflict" description="In Ref. 1; BAF73926." evidence="3" ref="1">
    <original>D</original>
    <variation>N</variation>
    <location>
        <position position="471"/>
    </location>
</feature>
<proteinExistence type="evidence at protein level"/>
<sequence length="515" mass="56723">MNDQLTEVYASIDALIDYALAHLDLDPRNADWTRNQIFALFRLDSYPGPKTTTSAASVSDVVQDIVGSRSQAPYGEKTPDPLLAAFRAAATTAGLFKPEEGPAYADTIMGILSANPADLDDRFLLVEHRDGGMAAMQWFYDYCVANNYVKRAQLDRNPRFDSHGLTVTINLAKPEFKNMKKAAAGNAVAGGYPKCTICHENEGFAGRDKRTLRTLPVTLGGESWFWQFSPYGYFDQHGICVNTDHTPMHVDRDTFGHLLDFVDRFPGYFLGCNAALPRIGGSVLAHDHYQGGGELLPMHKAATWAAFTLADYPDAVVEILDWPGTAVRVVSKSRQSIIDVSDIIREAWVGYDDAANGIASHDADGNRQSALSPSAIITERGYEMSLIFRNNAISDEYPEGIFHAHPEYWPVKQEPIGLIEAQGLFILPGRLVDQLGIVEEALAEGRDLPDEVSEFSLEWGELAETLAGNHDREAIRQAVHDELGSVCYRILGNTAVFKQKATTQTFLESLGFAAR</sequence>
<accession>E8MF11</accession>
<accession>A7BJ82</accession>